<organism>
    <name type="scientific">Bordetella pertussis (strain Tohama I / ATCC BAA-589 / NCTC 13251)</name>
    <dbReference type="NCBI Taxonomy" id="257313"/>
    <lineage>
        <taxon>Bacteria</taxon>
        <taxon>Pseudomonadati</taxon>
        <taxon>Pseudomonadota</taxon>
        <taxon>Betaproteobacteria</taxon>
        <taxon>Burkholderiales</taxon>
        <taxon>Alcaligenaceae</taxon>
        <taxon>Bordetella</taxon>
    </lineage>
</organism>
<feature type="signal peptide" evidence="1">
    <location>
        <begin position="1"/>
        <end position="36"/>
    </location>
</feature>
<feature type="chain" id="PRO_0000034628" description="Tol-Pal system protein TolB" evidence="1">
    <location>
        <begin position="37"/>
        <end position="438"/>
    </location>
</feature>
<keyword id="KW-0131">Cell cycle</keyword>
<keyword id="KW-0132">Cell division</keyword>
<keyword id="KW-0574">Periplasm</keyword>
<keyword id="KW-1185">Reference proteome</keyword>
<keyword id="KW-0732">Signal</keyword>
<dbReference type="EMBL" id="BX640421">
    <property type="protein sequence ID" value="CAE43608.1"/>
    <property type="molecule type" value="Genomic_DNA"/>
</dbReference>
<dbReference type="RefSeq" id="NP_881876.1">
    <property type="nucleotide sequence ID" value="NC_002929.2"/>
</dbReference>
<dbReference type="RefSeq" id="WP_010931417.1">
    <property type="nucleotide sequence ID" value="NZ_CP039022.1"/>
</dbReference>
<dbReference type="SMR" id="Q7VU03"/>
<dbReference type="STRING" id="257313.BP3343"/>
<dbReference type="PaxDb" id="257313-BP3343"/>
<dbReference type="GeneID" id="69600653"/>
<dbReference type="KEGG" id="bpe:BP3343"/>
<dbReference type="PATRIC" id="fig|257313.5.peg.3623"/>
<dbReference type="eggNOG" id="COG0823">
    <property type="taxonomic scope" value="Bacteria"/>
</dbReference>
<dbReference type="HOGENOM" id="CLU_047123_0_0_4"/>
<dbReference type="Proteomes" id="UP000002676">
    <property type="component" value="Chromosome"/>
</dbReference>
<dbReference type="GO" id="GO:0042597">
    <property type="term" value="C:periplasmic space"/>
    <property type="evidence" value="ECO:0007669"/>
    <property type="project" value="UniProtKB-SubCell"/>
</dbReference>
<dbReference type="GO" id="GO:0051301">
    <property type="term" value="P:cell division"/>
    <property type="evidence" value="ECO:0007669"/>
    <property type="project" value="UniProtKB-UniRule"/>
</dbReference>
<dbReference type="GO" id="GO:0017038">
    <property type="term" value="P:protein import"/>
    <property type="evidence" value="ECO:0007669"/>
    <property type="project" value="InterPro"/>
</dbReference>
<dbReference type="Gene3D" id="2.120.10.30">
    <property type="entry name" value="TolB, C-terminal domain"/>
    <property type="match status" value="1"/>
</dbReference>
<dbReference type="Gene3D" id="3.40.50.10070">
    <property type="entry name" value="TolB, N-terminal domain"/>
    <property type="match status" value="1"/>
</dbReference>
<dbReference type="HAMAP" id="MF_00671">
    <property type="entry name" value="TolB"/>
    <property type="match status" value="1"/>
</dbReference>
<dbReference type="InterPro" id="IPR011042">
    <property type="entry name" value="6-blade_b-propeller_TolB-like"/>
</dbReference>
<dbReference type="InterPro" id="IPR011659">
    <property type="entry name" value="PD40"/>
</dbReference>
<dbReference type="InterPro" id="IPR014167">
    <property type="entry name" value="Tol-Pal_TolB"/>
</dbReference>
<dbReference type="InterPro" id="IPR007195">
    <property type="entry name" value="TolB_N"/>
</dbReference>
<dbReference type="NCBIfam" id="TIGR02800">
    <property type="entry name" value="propeller_TolB"/>
    <property type="match status" value="1"/>
</dbReference>
<dbReference type="PANTHER" id="PTHR36842:SF1">
    <property type="entry name" value="PROTEIN TOLB"/>
    <property type="match status" value="1"/>
</dbReference>
<dbReference type="PANTHER" id="PTHR36842">
    <property type="entry name" value="PROTEIN TOLB HOMOLOG"/>
    <property type="match status" value="1"/>
</dbReference>
<dbReference type="Pfam" id="PF07676">
    <property type="entry name" value="PD40"/>
    <property type="match status" value="4"/>
</dbReference>
<dbReference type="Pfam" id="PF04052">
    <property type="entry name" value="TolB_N"/>
    <property type="match status" value="1"/>
</dbReference>
<dbReference type="SUPFAM" id="SSF52964">
    <property type="entry name" value="TolB, N-terminal domain"/>
    <property type="match status" value="1"/>
</dbReference>
<dbReference type="SUPFAM" id="SSF69304">
    <property type="entry name" value="Tricorn protease N-terminal domain"/>
    <property type="match status" value="1"/>
</dbReference>
<sequence length="438" mass="47148">MTPAFRRADLTGFLRTYGAALILLLAAMLAWQPAQAQLRVDISGTGATQYPVAIADFAVDDTHGRALAEVIRADLTRTGQFRLINAAGSGLNVDSQVAHDDWRAKGADFLAYGSITRGPDGRYDVRYRLADTVKKGQLDGVAFSGTEQELRRVAHQIADRIYEKITGVRGVFSTRIAYVLKRGSTYELQVADADGQNPQVALRSREPIISPSWSPDGSRLAYVSFESGKPVVYVHTLATSARIPVANFKGNNSAPAWSPDGSQLAVALTRDGLSQIYIVSAGGGSNMRRITRSPGIDTEPNFTPDGRSIIFTSDRSGGPQIYQTGLDGGDARRLTFNGGYNISPRISPDGSTLLYVARRDGAFRIASLNLSSGSETLLTDGRDDQSPSFAPNGMQVLYAAIQNGRSVLAGVSSDGRVRQTLSVLNGEIREPTWGPFTR</sequence>
<accession>Q7VU03</accession>
<comment type="function">
    <text evidence="1">Part of the Tol-Pal system, which plays a role in outer membrane invagination during cell division and is important for maintaining outer membrane integrity.</text>
</comment>
<comment type="subunit">
    <text evidence="1">The Tol-Pal system is composed of five core proteins: the inner membrane proteins TolA, TolQ and TolR, the periplasmic protein TolB and the outer membrane protein Pal. They form a network linking the inner and outer membranes and the peptidoglycan layer.</text>
</comment>
<comment type="subcellular location">
    <subcellularLocation>
        <location evidence="1">Periplasm</location>
    </subcellularLocation>
</comment>
<comment type="similarity">
    <text evidence="1">Belongs to the TolB family.</text>
</comment>
<proteinExistence type="inferred from homology"/>
<evidence type="ECO:0000255" key="1">
    <source>
        <dbReference type="HAMAP-Rule" id="MF_00671"/>
    </source>
</evidence>
<protein>
    <recommendedName>
        <fullName evidence="1">Tol-Pal system protein TolB</fullName>
    </recommendedName>
</protein>
<name>TOLB_BORPE</name>
<reference key="1">
    <citation type="journal article" date="2003" name="Nat. Genet.">
        <title>Comparative analysis of the genome sequences of Bordetella pertussis, Bordetella parapertussis and Bordetella bronchiseptica.</title>
        <authorList>
            <person name="Parkhill J."/>
            <person name="Sebaihia M."/>
            <person name="Preston A."/>
            <person name="Murphy L.D."/>
            <person name="Thomson N.R."/>
            <person name="Harris D.E."/>
            <person name="Holden M.T.G."/>
            <person name="Churcher C.M."/>
            <person name="Bentley S.D."/>
            <person name="Mungall K.L."/>
            <person name="Cerdeno-Tarraga A.-M."/>
            <person name="Temple L."/>
            <person name="James K.D."/>
            <person name="Harris B."/>
            <person name="Quail M.A."/>
            <person name="Achtman M."/>
            <person name="Atkin R."/>
            <person name="Baker S."/>
            <person name="Basham D."/>
            <person name="Bason N."/>
            <person name="Cherevach I."/>
            <person name="Chillingworth T."/>
            <person name="Collins M."/>
            <person name="Cronin A."/>
            <person name="Davis P."/>
            <person name="Doggett J."/>
            <person name="Feltwell T."/>
            <person name="Goble A."/>
            <person name="Hamlin N."/>
            <person name="Hauser H."/>
            <person name="Holroyd S."/>
            <person name="Jagels K."/>
            <person name="Leather S."/>
            <person name="Moule S."/>
            <person name="Norberczak H."/>
            <person name="O'Neil S."/>
            <person name="Ormond D."/>
            <person name="Price C."/>
            <person name="Rabbinowitsch E."/>
            <person name="Rutter S."/>
            <person name="Sanders M."/>
            <person name="Saunders D."/>
            <person name="Seeger K."/>
            <person name="Sharp S."/>
            <person name="Simmonds M."/>
            <person name="Skelton J."/>
            <person name="Squares R."/>
            <person name="Squares S."/>
            <person name="Stevens K."/>
            <person name="Unwin L."/>
            <person name="Whitehead S."/>
            <person name="Barrell B.G."/>
            <person name="Maskell D.J."/>
        </authorList>
    </citation>
    <scope>NUCLEOTIDE SEQUENCE [LARGE SCALE GENOMIC DNA]</scope>
    <source>
        <strain>Tohama I / ATCC BAA-589 / NCTC 13251</strain>
    </source>
</reference>
<gene>
    <name evidence="1" type="primary">tolB</name>
    <name type="ordered locus">BP3343</name>
</gene>